<protein>
    <recommendedName>
        <fullName evidence="7">Transcription factor MBS1</fullName>
    </recommendedName>
    <alternativeName>
        <fullName evidence="7">Mbp1/Swi4-like protein 1</fullName>
    </alternativeName>
</protein>
<gene>
    <name evidence="7" type="primary">MBS1</name>
    <name type="ORF">CNAG_07464</name>
</gene>
<organism>
    <name type="scientific">Cryptococcus neoformans var. grubii serotype A (strain H99 / ATCC 208821 / CBS 10515 / FGSC 9487)</name>
    <name type="common">Filobasidiella neoformans var. grubii</name>
    <dbReference type="NCBI Taxonomy" id="235443"/>
    <lineage>
        <taxon>Eukaryota</taxon>
        <taxon>Fungi</taxon>
        <taxon>Dikarya</taxon>
        <taxon>Basidiomycota</taxon>
        <taxon>Agaricomycotina</taxon>
        <taxon>Tremellomycetes</taxon>
        <taxon>Tremellales</taxon>
        <taxon>Cryptococcaceae</taxon>
        <taxon>Cryptococcus</taxon>
        <taxon>Cryptococcus neoformans species complex</taxon>
    </lineage>
</organism>
<accession>J9VG42</accession>
<reference key="1">
    <citation type="journal article" date="2014" name="PLoS Genet.">
        <title>Analysis of the genome and transcriptome of Cryptococcus neoformans var. grubii reveals complex RNA expression and microevolution leading to virulence attenuation.</title>
        <authorList>
            <person name="Janbon G."/>
            <person name="Ormerod K.L."/>
            <person name="Paulet D."/>
            <person name="Byrnes E.J. III"/>
            <person name="Yadav V."/>
            <person name="Chatterjee G."/>
            <person name="Mullapudi N."/>
            <person name="Hon C.-C."/>
            <person name="Billmyre R.B."/>
            <person name="Brunel F."/>
            <person name="Bahn Y.-S."/>
            <person name="Chen W."/>
            <person name="Chen Y."/>
            <person name="Chow E.W.L."/>
            <person name="Coppee J.-Y."/>
            <person name="Floyd-Averette A."/>
            <person name="Gaillardin C."/>
            <person name="Gerik K.J."/>
            <person name="Goldberg J."/>
            <person name="Gonzalez-Hilarion S."/>
            <person name="Gujja S."/>
            <person name="Hamlin J.L."/>
            <person name="Hsueh Y.-P."/>
            <person name="Ianiri G."/>
            <person name="Jones S."/>
            <person name="Kodira C.D."/>
            <person name="Kozubowski L."/>
            <person name="Lam W."/>
            <person name="Marra M."/>
            <person name="Mesner L.D."/>
            <person name="Mieczkowski P.A."/>
            <person name="Moyrand F."/>
            <person name="Nielsen K."/>
            <person name="Proux C."/>
            <person name="Rossignol T."/>
            <person name="Schein J.E."/>
            <person name="Sun S."/>
            <person name="Wollschlaeger C."/>
            <person name="Wood I.A."/>
            <person name="Zeng Q."/>
            <person name="Neuveglise C."/>
            <person name="Newlon C.S."/>
            <person name="Perfect J.R."/>
            <person name="Lodge J.K."/>
            <person name="Idnurm A."/>
            <person name="Stajich J.E."/>
            <person name="Kronstad J.W."/>
            <person name="Sanyal K."/>
            <person name="Heitman J."/>
            <person name="Fraser J.A."/>
            <person name="Cuomo C.A."/>
            <person name="Dietrich F.S."/>
        </authorList>
    </citation>
    <scope>NUCLEOTIDE SEQUENCE [LARGE SCALE GENOMIC DNA]</scope>
    <source>
        <strain>H99 / ATCC 208821 / CBS 10515 / FGSC 9487</strain>
    </source>
</reference>
<reference key="2">
    <citation type="journal article" date="2012" name="Eukaryot. Cell">
        <title>A flucytosine-responsive Mbp1/Swi4-like protein, Mbs1, plays pleiotropic roles in antifungal drug resistance, stress response, and virulence of Cryptococcus neoformans.</title>
        <authorList>
            <person name="Song M.H."/>
            <person name="Lee J.W."/>
            <person name="Kim M.S."/>
            <person name="Yoon J.K."/>
            <person name="White T.C."/>
            <person name="Floyd A."/>
            <person name="Heitman J."/>
            <person name="Strain A.K."/>
            <person name="Nielsen J.N."/>
            <person name="Nielsen K."/>
            <person name="Bahn Y.S."/>
        </authorList>
    </citation>
    <scope>FUNCTION</scope>
    <scope>DISRUPTION PHENOTYPE</scope>
    <scope>INDUCTION</scope>
</reference>
<reference key="3">
    <citation type="journal article" date="2015" name="Nat. Commun.">
        <title>Systematic functional profiling of transcription factor networks in Cryptococcus neoformans.</title>
        <authorList>
            <person name="Jung K.W."/>
            <person name="Yang D.H."/>
            <person name="Maeng S."/>
            <person name="Lee K.T."/>
            <person name="So Y.S."/>
            <person name="Hong J."/>
            <person name="Choi J."/>
            <person name="Byun H.J."/>
            <person name="Kim H."/>
            <person name="Bang S."/>
            <person name="Song M.H."/>
            <person name="Lee J.W."/>
            <person name="Kim M.S."/>
            <person name="Kim S.Y."/>
            <person name="Ji J.H."/>
            <person name="Park G."/>
            <person name="Kwon H."/>
            <person name="Cha S."/>
            <person name="Meyers G.L."/>
            <person name="Wang L.L."/>
            <person name="Jang J."/>
            <person name="Janbon G."/>
            <person name="Adedoyin G."/>
            <person name="Kim T."/>
            <person name="Averette A.K."/>
            <person name="Heitman J."/>
            <person name="Cheong E."/>
            <person name="Lee Y.H."/>
            <person name="Lee Y.W."/>
            <person name="Bahn Y.S."/>
        </authorList>
    </citation>
    <scope>FUNCTION</scope>
</reference>
<reference key="4">
    <citation type="journal article" date="2019" name="MBio">
        <title>Unraveling melanin biosynthesis and signaling networks in Cryptococcus neoformans.</title>
        <authorList>
            <person name="Lee D."/>
            <person name="Jang E.H."/>
            <person name="Lee M."/>
            <person name="Kim S.W."/>
            <person name="Lee Y."/>
            <person name="Lee K.T."/>
            <person name="Bahn Y.S."/>
        </authorList>
    </citation>
    <scope>INDUCTION</scope>
    <scope>FUNCTION</scope>
    <scope>DISRUPTION PHENOTYPE</scope>
    <scope>SUBCELLULAR LOCATION</scope>
</reference>
<sequence length="774" mass="86034">MGPIPSTRRLTGTPHSFISRRAPPECMWYVCMFANLEITFYDSGVPVYEMVCRDVAVMRRRSDAYLNATQILKVAGFDKPQRTRVLEREVQKGEHEKVQGGYGKYQGTWIPIERGLALAKQYGVEDILRPIIDYVPTSVSPPPAPKHSVAPPSKARRDKEKETGRTKATPSRTGPTSAAALQAQAQLNRAKMHDSTPDADASFRSFEERVSLTPEDDSSSDTPSPVASVMTDQDMEVDKMGMHMNMPNVTLSQNMEELGAGSRKRSAAMMMEDEDQFGHLRSVRGNSAVHTPHGTPRHLGIGMPPEPIGPEQYTDIILNYFVSETSQIPSILVSPPHDFDPNAPIDDDGHTALHWACAMGRVRVVKLLLTAGASIFAGNNAEQTPLMRSVMFSNNYDMRKFPELYELLHRSTLNIDKQNRTVFHHIANLALTKGKTHAAKYYMETILARLADYPQELADVINFQDEEGETALTIAARARSRRLVKALLDHGANPKIKNRDSRSAEDYILEDERFRSSPVPAPNGGVGKVSTSAAAEKPIFAPQLYFSEAARLCGGQALTDITSHMQSLARSFDAELQGKERDILQAKALLTNIHTEVTENGRSITAITNQAAPLEEKRHELESLQASLKTKVKDALKKGYIGWLEGELIREQRWEKGELEGNEEEKAAVQALRDVPTGGQEVVQAEEEKLRWEIEEKRKRRAMFVEKFVRAQAEAGTSEQIAKYRKLVSAGLGGVSTNEVDELMNQLLEGLEEENDNQVYNTSAGESGPSSWVQ</sequence>
<comment type="function">
    <text evidence="4 5 6">Transcription factor that positively regulates ergosterol biosynthesis and thereby affects polyene and azole drug susceptibility (PubMed:22080454). Plays a role in maintenance of membrane stability and osmotic stress response (PubMed:22080454). Involved in genotoxic and oxidative stress responses (PubMed:22080454). Also promotes production of melanin and capsule and thereby is required for full virulence (PubMed:22080454, PubMed:25849373, PubMed:31575776).</text>
</comment>
<comment type="subcellular location">
    <subcellularLocation>
        <location evidence="2 6">Nucleus</location>
    </subcellularLocation>
    <text evidence="6">Constitutively localized to the nucleus under nutrient-rich conditions, and its nuclear localization is not changed by nutrient starvation.</text>
</comment>
<comment type="induction">
    <text evidence="4 6">Expression is regulated in response to flucytosine in a TCO2/HOG1-dependent manner (PubMed:22080454). Basal expression is positively regulates by HOB1 (PubMed:31575776).</text>
</comment>
<comment type="disruption phenotype">
    <text evidence="4 6">Exhibits increased susceptibility to flucytosine (PubMed:22080454). Also leads to hypersusceptibility to SDS (PubMed:22080454). Reduces LAC1 induction mediated by nutrient starvation and leads to weakly reduced melanin production (PubMed:31575776). Expression is significantly reduced by nutrient starvation (PubMed:31575776).</text>
</comment>
<dbReference type="EMBL" id="CP003821">
    <property type="protein sequence ID" value="AFR93078.2"/>
    <property type="molecule type" value="Genomic_DNA"/>
</dbReference>
<dbReference type="RefSeq" id="XP_012047132.1">
    <property type="nucleotide sequence ID" value="XM_012191742.1"/>
</dbReference>
<dbReference type="SMR" id="J9VG42"/>
<dbReference type="GeneID" id="23890309"/>
<dbReference type="KEGG" id="cng:CNAG_07464"/>
<dbReference type="VEuPathDB" id="FungiDB:CNAG_07464"/>
<dbReference type="HOGENOM" id="CLU_009666_2_0_1"/>
<dbReference type="OrthoDB" id="5912at5206"/>
<dbReference type="Proteomes" id="UP000010091">
    <property type="component" value="Chromosome 2"/>
</dbReference>
<dbReference type="GO" id="GO:0030907">
    <property type="term" value="C:MBF transcription complex"/>
    <property type="evidence" value="ECO:0007669"/>
    <property type="project" value="TreeGrafter"/>
</dbReference>
<dbReference type="GO" id="GO:0033309">
    <property type="term" value="C:SBF transcription complex"/>
    <property type="evidence" value="ECO:0007669"/>
    <property type="project" value="TreeGrafter"/>
</dbReference>
<dbReference type="GO" id="GO:0003677">
    <property type="term" value="F:DNA binding"/>
    <property type="evidence" value="ECO:0007669"/>
    <property type="project" value="UniProtKB-KW"/>
</dbReference>
<dbReference type="GO" id="GO:0001228">
    <property type="term" value="F:DNA-binding transcription activator activity, RNA polymerase II-specific"/>
    <property type="evidence" value="ECO:0007669"/>
    <property type="project" value="UniProtKB-ARBA"/>
</dbReference>
<dbReference type="GO" id="GO:0042438">
    <property type="term" value="P:melanin biosynthetic process"/>
    <property type="evidence" value="ECO:0007669"/>
    <property type="project" value="UniProtKB-KW"/>
</dbReference>
<dbReference type="GO" id="GO:0008202">
    <property type="term" value="P:steroid metabolic process"/>
    <property type="evidence" value="ECO:0007669"/>
    <property type="project" value="UniProtKB-KW"/>
</dbReference>
<dbReference type="FunFam" id="3.10.260.10:FF:000001">
    <property type="entry name" value="APSES transcription factor (MbpA)"/>
    <property type="match status" value="1"/>
</dbReference>
<dbReference type="FunFam" id="1.25.40.20:FF:000238">
    <property type="entry name" value="Unplaced genomic scaffold supercont1.20, whole genome shotgun sequence"/>
    <property type="match status" value="1"/>
</dbReference>
<dbReference type="Gene3D" id="1.25.40.20">
    <property type="entry name" value="Ankyrin repeat-containing domain"/>
    <property type="match status" value="1"/>
</dbReference>
<dbReference type="Gene3D" id="3.10.260.10">
    <property type="entry name" value="Transcription regulator HTH, APSES-type DNA-binding domain"/>
    <property type="match status" value="1"/>
</dbReference>
<dbReference type="InterPro" id="IPR002110">
    <property type="entry name" value="Ankyrin_rpt"/>
</dbReference>
<dbReference type="InterPro" id="IPR036770">
    <property type="entry name" value="Ankyrin_rpt-contain_sf"/>
</dbReference>
<dbReference type="InterPro" id="IPR036887">
    <property type="entry name" value="HTH_APSES_sf"/>
</dbReference>
<dbReference type="InterPro" id="IPR018004">
    <property type="entry name" value="KilA/APSES_HTH"/>
</dbReference>
<dbReference type="InterPro" id="IPR051642">
    <property type="entry name" value="SWI6-like"/>
</dbReference>
<dbReference type="InterPro" id="IPR003163">
    <property type="entry name" value="Tscrpt_reg_HTH_APSES-type"/>
</dbReference>
<dbReference type="PANTHER" id="PTHR43828">
    <property type="entry name" value="ASPARAGINASE"/>
    <property type="match status" value="1"/>
</dbReference>
<dbReference type="PANTHER" id="PTHR43828:SF15">
    <property type="entry name" value="TRANSCRIPTION FACTOR MBP1"/>
    <property type="match status" value="1"/>
</dbReference>
<dbReference type="Pfam" id="PF00023">
    <property type="entry name" value="Ank"/>
    <property type="match status" value="1"/>
</dbReference>
<dbReference type="Pfam" id="PF12796">
    <property type="entry name" value="Ank_2"/>
    <property type="match status" value="1"/>
</dbReference>
<dbReference type="Pfam" id="PF04383">
    <property type="entry name" value="KilA-N"/>
    <property type="match status" value="1"/>
</dbReference>
<dbReference type="PRINTS" id="PR01415">
    <property type="entry name" value="ANKYRIN"/>
</dbReference>
<dbReference type="SMART" id="SM00248">
    <property type="entry name" value="ANK"/>
    <property type="match status" value="2"/>
</dbReference>
<dbReference type="SMART" id="SM01252">
    <property type="entry name" value="KilA-N"/>
    <property type="match status" value="1"/>
</dbReference>
<dbReference type="SUPFAM" id="SSF48403">
    <property type="entry name" value="Ankyrin repeat"/>
    <property type="match status" value="1"/>
</dbReference>
<dbReference type="SUPFAM" id="SSF54616">
    <property type="entry name" value="DNA-binding domain of Mlu1-box binding protein MBP1"/>
    <property type="match status" value="1"/>
</dbReference>
<dbReference type="PROSITE" id="PS50297">
    <property type="entry name" value="ANK_REP_REGION"/>
    <property type="match status" value="2"/>
</dbReference>
<dbReference type="PROSITE" id="PS50088">
    <property type="entry name" value="ANK_REPEAT"/>
    <property type="match status" value="2"/>
</dbReference>
<dbReference type="PROSITE" id="PS51299">
    <property type="entry name" value="HTH_APSES"/>
    <property type="match status" value="1"/>
</dbReference>
<evidence type="ECO:0000255" key="1"/>
<evidence type="ECO:0000255" key="2">
    <source>
        <dbReference type="PROSITE-ProRule" id="PRU00630"/>
    </source>
</evidence>
<evidence type="ECO:0000256" key="3">
    <source>
        <dbReference type="SAM" id="MobiDB-lite"/>
    </source>
</evidence>
<evidence type="ECO:0000269" key="4">
    <source>
    </source>
</evidence>
<evidence type="ECO:0000269" key="5">
    <source>
    </source>
</evidence>
<evidence type="ECO:0000269" key="6">
    <source>
    </source>
</evidence>
<evidence type="ECO:0000303" key="7">
    <source>
    </source>
</evidence>
<name>MBS1_CRYNH</name>
<keyword id="KW-0040">ANK repeat</keyword>
<keyword id="KW-0238">DNA-binding</keyword>
<keyword id="KW-0443">Lipid metabolism</keyword>
<keyword id="KW-0470">Melanin biosynthesis</keyword>
<keyword id="KW-0539">Nucleus</keyword>
<keyword id="KW-0677">Repeat</keyword>
<keyword id="KW-0753">Steroid metabolism</keyword>
<keyword id="KW-1207">Sterol metabolism</keyword>
<keyword id="KW-0346">Stress response</keyword>
<keyword id="KW-0804">Transcription</keyword>
<keyword id="KW-0805">Transcription regulation</keyword>
<keyword id="KW-0843">Virulence</keyword>
<proteinExistence type="evidence at transcript level"/>
<feature type="chain" id="PRO_0000460781" description="Transcription factor MBS1">
    <location>
        <begin position="1"/>
        <end position="774"/>
    </location>
</feature>
<feature type="domain" description="HTH APSES-type" evidence="2">
    <location>
        <begin position="37"/>
        <end position="143"/>
    </location>
</feature>
<feature type="repeat" description="ANK 1" evidence="1">
    <location>
        <begin position="348"/>
        <end position="377"/>
    </location>
</feature>
<feature type="repeat" description="ANK 2" evidence="1">
    <location>
        <begin position="467"/>
        <end position="496"/>
    </location>
</feature>
<feature type="DNA-binding region" description="H-T-H motif" evidence="2">
    <location>
        <begin position="68"/>
        <end position="89"/>
    </location>
</feature>
<feature type="region of interest" description="Disordered" evidence="3">
    <location>
        <begin position="135"/>
        <end position="180"/>
    </location>
</feature>
<feature type="region of interest" description="Disordered" evidence="3">
    <location>
        <begin position="209"/>
        <end position="229"/>
    </location>
</feature>
<feature type="region of interest" description="Disordered" evidence="3">
    <location>
        <begin position="752"/>
        <end position="774"/>
    </location>
</feature>
<feature type="compositionally biased region" description="Basic and acidic residues" evidence="3">
    <location>
        <begin position="155"/>
        <end position="165"/>
    </location>
</feature>
<feature type="compositionally biased region" description="Polar residues" evidence="3">
    <location>
        <begin position="166"/>
        <end position="176"/>
    </location>
</feature>
<feature type="compositionally biased region" description="Polar residues" evidence="3">
    <location>
        <begin position="757"/>
        <end position="774"/>
    </location>
</feature>